<feature type="chain" id="PRO_0000064848" description="Apoptosis inducing factor BLCAP">
    <location>
        <begin position="1"/>
        <end position="87"/>
    </location>
</feature>
<feature type="transmembrane region" description="Helical" evidence="2">
    <location>
        <begin position="19"/>
        <end position="39"/>
    </location>
</feature>
<feature type="transmembrane region" description="Helical" evidence="2">
    <location>
        <begin position="43"/>
        <end position="63"/>
    </location>
</feature>
<gene>
    <name type="primary">BLCAP</name>
</gene>
<accession>P62954</accession>
<accession>A5D976</accession>
<accession>O60629</accession>
<accession>Q17QQ8</accession>
<accession>Q9D3B5</accession>
<dbReference type="EMBL" id="AB071597">
    <property type="protein sequence ID" value="BAB68125.1"/>
    <property type="molecule type" value="mRNA"/>
</dbReference>
<dbReference type="EMBL" id="BT030495">
    <property type="protein sequence ID" value="ABQ12935.1"/>
    <property type="molecule type" value="mRNA"/>
</dbReference>
<dbReference type="EMBL" id="BC118229">
    <property type="protein sequence ID" value="AAI18230.1"/>
    <property type="molecule type" value="mRNA"/>
</dbReference>
<dbReference type="RefSeq" id="NP_776675.1">
    <property type="nucleotide sequence ID" value="NM_174250.3"/>
</dbReference>
<dbReference type="RefSeq" id="XP_005214547.1">
    <property type="nucleotide sequence ID" value="XM_005214490.3"/>
</dbReference>
<dbReference type="FunCoup" id="P62954">
    <property type="interactions" value="1048"/>
</dbReference>
<dbReference type="STRING" id="9913.ENSBTAP00000004167"/>
<dbReference type="PaxDb" id="9913-ENSBTAP00000004167"/>
<dbReference type="Ensembl" id="ENSBTAT00000004167.5">
    <property type="protein sequence ID" value="ENSBTAP00000004167.3"/>
    <property type="gene ID" value="ENSBTAG00000003209.5"/>
</dbReference>
<dbReference type="GeneID" id="281649"/>
<dbReference type="KEGG" id="bta:281649"/>
<dbReference type="CTD" id="10904"/>
<dbReference type="VEuPathDB" id="HostDB:ENSBTAG00000003209"/>
<dbReference type="VGNC" id="VGNC:54701">
    <property type="gene designation" value="BLCAP"/>
</dbReference>
<dbReference type="eggNOG" id="KOG4489">
    <property type="taxonomic scope" value="Eukaryota"/>
</dbReference>
<dbReference type="GeneTree" id="ENSGT00390000014105"/>
<dbReference type="HOGENOM" id="CLU_181908_0_0_1"/>
<dbReference type="InParanoid" id="P62954"/>
<dbReference type="OMA" id="FLLCYSC"/>
<dbReference type="OrthoDB" id="5772623at2759"/>
<dbReference type="TreeFam" id="TF313306"/>
<dbReference type="Proteomes" id="UP000009136">
    <property type="component" value="Chromosome 13"/>
</dbReference>
<dbReference type="Bgee" id="ENSBTAG00000003209">
    <property type="expression patterns" value="Expressed in adenohypophysis and 106 other cell types or tissues"/>
</dbReference>
<dbReference type="GO" id="GO:0005737">
    <property type="term" value="C:cytoplasm"/>
    <property type="evidence" value="ECO:0007669"/>
    <property type="project" value="UniProtKB-SubCell"/>
</dbReference>
<dbReference type="GO" id="GO:0016020">
    <property type="term" value="C:membrane"/>
    <property type="evidence" value="ECO:0007669"/>
    <property type="project" value="UniProtKB-SubCell"/>
</dbReference>
<dbReference type="GO" id="GO:0005634">
    <property type="term" value="C:nucleus"/>
    <property type="evidence" value="ECO:0007669"/>
    <property type="project" value="UniProtKB-SubCell"/>
</dbReference>
<dbReference type="GO" id="GO:0030262">
    <property type="term" value="P:apoptotic nuclear changes"/>
    <property type="evidence" value="ECO:0007669"/>
    <property type="project" value="Ensembl"/>
</dbReference>
<dbReference type="InterPro" id="IPR009598">
    <property type="entry name" value="BCALP"/>
</dbReference>
<dbReference type="PANTHER" id="PTHR13259">
    <property type="entry name" value="BLADDER CANCER 10 KD PROTEIN HOMOLOG"/>
    <property type="match status" value="1"/>
</dbReference>
<dbReference type="PANTHER" id="PTHR13259:SF1">
    <property type="entry name" value="BLADDER CANCER-ASSOCIATED PROTEIN"/>
    <property type="match status" value="1"/>
</dbReference>
<dbReference type="Pfam" id="PF06726">
    <property type="entry name" value="BC10"/>
    <property type="match status" value="1"/>
</dbReference>
<dbReference type="SMART" id="SM01396">
    <property type="entry name" value="BC10"/>
    <property type="match status" value="1"/>
</dbReference>
<reference key="1">
    <citation type="submission" date="2001-09" db="EMBL/GenBank/DDBJ databases">
        <title>Bovine mRNA for Blcap.</title>
        <authorList>
            <person name="Hahn Y."/>
        </authorList>
    </citation>
    <scope>NUCLEOTIDE SEQUENCE [MRNA]</scope>
</reference>
<reference key="2">
    <citation type="journal article" date="2005" name="BMC Genomics">
        <title>Characterization of 954 bovine full-CDS cDNA sequences.</title>
        <authorList>
            <person name="Harhay G.P."/>
            <person name="Sonstegard T.S."/>
            <person name="Keele J.W."/>
            <person name="Heaton M.P."/>
            <person name="Clawson M.L."/>
            <person name="Snelling W.M."/>
            <person name="Wiedmann R.T."/>
            <person name="Van Tassell C.P."/>
            <person name="Smith T.P.L."/>
        </authorList>
    </citation>
    <scope>NUCLEOTIDE SEQUENCE [LARGE SCALE MRNA]</scope>
</reference>
<reference key="3">
    <citation type="submission" date="2006-06" db="EMBL/GenBank/DDBJ databases">
        <authorList>
            <consortium name="NIH - Mammalian Gene Collection (MGC) project"/>
        </authorList>
    </citation>
    <scope>NUCLEOTIDE SEQUENCE [LARGE SCALE MRNA]</scope>
    <source>
        <strain>Hereford</strain>
        <tissue>Hippocampus</tissue>
    </source>
</reference>
<comment type="function">
    <text evidence="1">Acts as a tumor suppressor; induces growth arrest at G(1)/S checkpoint and apoptosis via RB1-dependent and p53/TP53- and NF-kappa-B-independent mechanisms. Modulates expression of genes involved in the regulation of proliferation, cell cycle and apoptosis.</text>
</comment>
<comment type="subunit">
    <text evidence="1">Interacts with RB1 (phosphorylated and unphosphorylated) (By similarity). Interacts with STAT3; the interaction is promoted by cell stimulation with IL6 and phosphorylation of STAT3 (By similarity).</text>
</comment>
<comment type="subcellular location">
    <subcellularLocation>
        <location evidence="1">Cytoplasm</location>
    </subcellularLocation>
    <subcellularLocation>
        <location evidence="1">Nucleus</location>
    </subcellularLocation>
    <subcellularLocation>
        <location evidence="2">Membrane</location>
        <topology evidence="2">Multi-pass membrane protein</topology>
    </subcellularLocation>
</comment>
<comment type="similarity">
    <text evidence="3">Belongs to the BLCAP family.</text>
</comment>
<sequence length="87" mass="9876">MYCLQWLLPVLLIPKPLNPALWFSHSMFMGFYLLSFLLERKPCTICALVFLAALFLICYSCWGNCFLYHCSDSPLPESAHDPGVVGT</sequence>
<name>BLCAP_BOVIN</name>
<evidence type="ECO:0000250" key="1">
    <source>
        <dbReference type="UniProtKB" id="P62952"/>
    </source>
</evidence>
<evidence type="ECO:0000255" key="2"/>
<evidence type="ECO:0000305" key="3"/>
<organism>
    <name type="scientific">Bos taurus</name>
    <name type="common">Bovine</name>
    <dbReference type="NCBI Taxonomy" id="9913"/>
    <lineage>
        <taxon>Eukaryota</taxon>
        <taxon>Metazoa</taxon>
        <taxon>Chordata</taxon>
        <taxon>Craniata</taxon>
        <taxon>Vertebrata</taxon>
        <taxon>Euteleostomi</taxon>
        <taxon>Mammalia</taxon>
        <taxon>Eutheria</taxon>
        <taxon>Laurasiatheria</taxon>
        <taxon>Artiodactyla</taxon>
        <taxon>Ruminantia</taxon>
        <taxon>Pecora</taxon>
        <taxon>Bovidae</taxon>
        <taxon>Bovinae</taxon>
        <taxon>Bos</taxon>
    </lineage>
</organism>
<keyword id="KW-0053">Apoptosis</keyword>
<keyword id="KW-0131">Cell cycle</keyword>
<keyword id="KW-0963">Cytoplasm</keyword>
<keyword id="KW-0472">Membrane</keyword>
<keyword id="KW-0539">Nucleus</keyword>
<keyword id="KW-1185">Reference proteome</keyword>
<keyword id="KW-0812">Transmembrane</keyword>
<keyword id="KW-1133">Transmembrane helix</keyword>
<keyword id="KW-0043">Tumor suppressor</keyword>
<proteinExistence type="inferred from homology"/>
<protein>
    <recommendedName>
        <fullName evidence="3">Apoptosis inducing factor BLCAP</fullName>
    </recommendedName>
    <alternativeName>
        <fullName>Bladder cancer-associated protein</fullName>
    </alternativeName>
</protein>